<organism>
    <name type="scientific">Rickettsia bellii (strain RML369-C)</name>
    <dbReference type="NCBI Taxonomy" id="336407"/>
    <lineage>
        <taxon>Bacteria</taxon>
        <taxon>Pseudomonadati</taxon>
        <taxon>Pseudomonadota</taxon>
        <taxon>Alphaproteobacteria</taxon>
        <taxon>Rickettsiales</taxon>
        <taxon>Rickettsiaceae</taxon>
        <taxon>Rickettsieae</taxon>
        <taxon>Rickettsia</taxon>
        <taxon>belli group</taxon>
    </lineage>
</organism>
<protein>
    <recommendedName>
        <fullName evidence="1">NADPH-dependent 7-cyano-7-deazaguanine reductase</fullName>
        <ecNumber evidence="1">1.7.1.13</ecNumber>
    </recommendedName>
    <alternativeName>
        <fullName evidence="1">7-cyano-7-carbaguanine reductase</fullName>
    </alternativeName>
    <alternativeName>
        <fullName evidence="1">NADPH-dependent nitrile oxidoreductase</fullName>
    </alternativeName>
    <alternativeName>
        <fullName evidence="1">PreQ(0) reductase</fullName>
    </alternativeName>
</protein>
<comment type="function">
    <text evidence="1">Catalyzes the NADPH-dependent reduction of 7-cyano-7-deazaguanine (preQ0) to 7-aminomethyl-7-deazaguanine (preQ1).</text>
</comment>
<comment type="catalytic activity">
    <reaction evidence="1">
        <text>7-aminomethyl-7-carbaguanine + 2 NADP(+) = 7-cyano-7-deazaguanine + 2 NADPH + 3 H(+)</text>
        <dbReference type="Rhea" id="RHEA:13409"/>
        <dbReference type="ChEBI" id="CHEBI:15378"/>
        <dbReference type="ChEBI" id="CHEBI:45075"/>
        <dbReference type="ChEBI" id="CHEBI:57783"/>
        <dbReference type="ChEBI" id="CHEBI:58349"/>
        <dbReference type="ChEBI" id="CHEBI:58703"/>
        <dbReference type="EC" id="1.7.1.13"/>
    </reaction>
</comment>
<comment type="pathway">
    <text evidence="1">tRNA modification; tRNA-queuosine biosynthesis.</text>
</comment>
<comment type="subunit">
    <text evidence="1">Homodimer.</text>
</comment>
<comment type="subcellular location">
    <subcellularLocation>
        <location evidence="1">Cytoplasm</location>
    </subcellularLocation>
</comment>
<comment type="similarity">
    <text evidence="1">Belongs to the GTP cyclohydrolase I family. QueF type 2 subfamily.</text>
</comment>
<gene>
    <name evidence="1" type="primary">queF</name>
    <name type="ordered locus">RBE_1294</name>
</gene>
<feature type="chain" id="PRO_0000247717" description="NADPH-dependent 7-cyano-7-deazaguanine reductase">
    <location>
        <begin position="1"/>
        <end position="273"/>
    </location>
</feature>
<feature type="active site" description="Thioimide intermediate" evidence="1">
    <location>
        <position position="179"/>
    </location>
</feature>
<feature type="active site" description="Proton donor" evidence="1">
    <location>
        <position position="186"/>
    </location>
</feature>
<feature type="binding site" evidence="1">
    <location>
        <begin position="81"/>
        <end position="83"/>
    </location>
    <ligand>
        <name>substrate</name>
    </ligand>
</feature>
<feature type="binding site" evidence="1">
    <location>
        <begin position="83"/>
        <end position="84"/>
    </location>
    <ligand>
        <name>NADPH</name>
        <dbReference type="ChEBI" id="CHEBI:57783"/>
    </ligand>
</feature>
<feature type="binding site" evidence="1">
    <location>
        <begin position="218"/>
        <end position="219"/>
    </location>
    <ligand>
        <name>substrate</name>
    </ligand>
</feature>
<feature type="binding site" evidence="1">
    <location>
        <begin position="247"/>
        <end position="248"/>
    </location>
    <ligand>
        <name>NADPH</name>
        <dbReference type="ChEBI" id="CHEBI:57783"/>
    </ligand>
</feature>
<reference key="1">
    <citation type="journal article" date="2006" name="PLoS Genet.">
        <title>Genome sequence of Rickettsia bellii illuminates the role of amoebae in gene exchanges between intracellular pathogens.</title>
        <authorList>
            <person name="Ogata H."/>
            <person name="La Scola B."/>
            <person name="Audic S."/>
            <person name="Renesto P."/>
            <person name="Blanc G."/>
            <person name="Robert C."/>
            <person name="Fournier P.-E."/>
            <person name="Claverie J.-M."/>
            <person name="Raoult D."/>
        </authorList>
    </citation>
    <scope>NUCLEOTIDE SEQUENCE [LARGE SCALE GENOMIC DNA]</scope>
    <source>
        <strain>RML369-C</strain>
    </source>
</reference>
<dbReference type="EC" id="1.7.1.13" evidence="1"/>
<dbReference type="EMBL" id="CP000087">
    <property type="protein sequence ID" value="ABE05375.1"/>
    <property type="molecule type" value="Genomic_DNA"/>
</dbReference>
<dbReference type="RefSeq" id="WP_011477945.1">
    <property type="nucleotide sequence ID" value="NC_007940.1"/>
</dbReference>
<dbReference type="SMR" id="Q1RGY9"/>
<dbReference type="KEGG" id="rbe:RBE_1294"/>
<dbReference type="eggNOG" id="COG0780">
    <property type="taxonomic scope" value="Bacteria"/>
</dbReference>
<dbReference type="eggNOG" id="COG2904">
    <property type="taxonomic scope" value="Bacteria"/>
</dbReference>
<dbReference type="HOGENOM" id="CLU_054738_0_0_5"/>
<dbReference type="OrthoDB" id="9789995at2"/>
<dbReference type="UniPathway" id="UPA00392"/>
<dbReference type="Proteomes" id="UP000001951">
    <property type="component" value="Chromosome"/>
</dbReference>
<dbReference type="GO" id="GO:0005737">
    <property type="term" value="C:cytoplasm"/>
    <property type="evidence" value="ECO:0007669"/>
    <property type="project" value="UniProtKB-SubCell"/>
</dbReference>
<dbReference type="GO" id="GO:0033739">
    <property type="term" value="F:preQ1 synthase activity"/>
    <property type="evidence" value="ECO:0007669"/>
    <property type="project" value="UniProtKB-UniRule"/>
</dbReference>
<dbReference type="GO" id="GO:0008616">
    <property type="term" value="P:queuosine biosynthetic process"/>
    <property type="evidence" value="ECO:0007669"/>
    <property type="project" value="UniProtKB-UniRule"/>
</dbReference>
<dbReference type="GO" id="GO:0006400">
    <property type="term" value="P:tRNA modification"/>
    <property type="evidence" value="ECO:0007669"/>
    <property type="project" value="UniProtKB-UniRule"/>
</dbReference>
<dbReference type="Gene3D" id="3.30.1130.10">
    <property type="match status" value="2"/>
</dbReference>
<dbReference type="HAMAP" id="MF_00817">
    <property type="entry name" value="QueF_type2"/>
    <property type="match status" value="1"/>
</dbReference>
<dbReference type="InterPro" id="IPR043133">
    <property type="entry name" value="GTP-CH-I_C/QueF"/>
</dbReference>
<dbReference type="InterPro" id="IPR050084">
    <property type="entry name" value="NADPH_dep_7-cyano-7-deazaG_red"/>
</dbReference>
<dbReference type="InterPro" id="IPR029500">
    <property type="entry name" value="QueF"/>
</dbReference>
<dbReference type="InterPro" id="IPR029139">
    <property type="entry name" value="QueF_N"/>
</dbReference>
<dbReference type="InterPro" id="IPR016428">
    <property type="entry name" value="QueF_type2"/>
</dbReference>
<dbReference type="NCBIfam" id="TIGR03138">
    <property type="entry name" value="QueF"/>
    <property type="match status" value="1"/>
</dbReference>
<dbReference type="PANTHER" id="PTHR34354">
    <property type="entry name" value="NADPH-DEPENDENT 7-CYANO-7-DEAZAGUANINE REDUCTASE"/>
    <property type="match status" value="1"/>
</dbReference>
<dbReference type="PANTHER" id="PTHR34354:SF1">
    <property type="entry name" value="NADPH-DEPENDENT 7-CYANO-7-DEAZAGUANINE REDUCTASE"/>
    <property type="match status" value="1"/>
</dbReference>
<dbReference type="Pfam" id="PF14489">
    <property type="entry name" value="QueF"/>
    <property type="match status" value="1"/>
</dbReference>
<dbReference type="Pfam" id="PF14819">
    <property type="entry name" value="QueF_N"/>
    <property type="match status" value="1"/>
</dbReference>
<dbReference type="PIRSF" id="PIRSF004750">
    <property type="entry name" value="Nitrile_oxidored_YqcD_prd"/>
    <property type="match status" value="1"/>
</dbReference>
<dbReference type="SUPFAM" id="SSF55620">
    <property type="entry name" value="Tetrahydrobiopterin biosynthesis enzymes-like"/>
    <property type="match status" value="1"/>
</dbReference>
<proteinExistence type="inferred from homology"/>
<keyword id="KW-0963">Cytoplasm</keyword>
<keyword id="KW-0521">NADP</keyword>
<keyword id="KW-0560">Oxidoreductase</keyword>
<keyword id="KW-0671">Queuosine biosynthesis</keyword>
<accession>Q1RGY9</accession>
<name>QUEF_RICBR</name>
<evidence type="ECO:0000255" key="1">
    <source>
        <dbReference type="HAMAP-Rule" id="MF_00817"/>
    </source>
</evidence>
<sequence>MTLSNSALGKKSTYKDTYDPTLLFKIPRIDNRKELGIVNDKLPFHGVDIWNAYELSWLDKKGKPCVAIFTFFVPTTSSHIVESKSVKLYLNSFNNFVVDSMEELKRTILQDLSNNTHAEVTGEIFPINTKIEFGSPTGINIDDIDIECSEYGPPNNSLIKHEDVLVEEELNSNLLKSNCLVTGQPDWGTIIIKYKGKKLKHDALLKYLVSFRNCNEFAEQCAERIFTDIKNAINPEFLSIYIIYTRRGGIDICPYRSTDSNYTLPSSKRLIRQ</sequence>